<dbReference type="EMBL" id="DQ106414">
    <property type="protein sequence ID" value="ABA47249.1"/>
    <property type="molecule type" value="Genomic_DNA"/>
</dbReference>
<dbReference type="RefSeq" id="YP_001552266.1">
    <property type="nucleotide sequence ID" value="NC_009989.1"/>
</dbReference>
<dbReference type="GeneID" id="10973880"/>
<dbReference type="KEGG" id="vg:10973880"/>
<dbReference type="Proteomes" id="UP000136605">
    <property type="component" value="Genome"/>
</dbReference>
<proteinExistence type="predicted"/>
<name>E41_ADES1</name>
<reference key="1">
    <citation type="journal article" date="2002" name="J. Gen. Virol.">
        <title>Genetic analysis of an adenovirus isolated from corn snake (Elaphe guttata) implies common origin with the members of the proposed new genus Atadenovirus.</title>
        <authorList>
            <person name="Farkas S.L."/>
            <person name="Benko M."/>
            <person name="Elo P.T."/>
            <person name="Ursu K."/>
            <person name="Dan A."/>
            <person name="Ahne W."/>
            <person name="Harrach B."/>
        </authorList>
    </citation>
    <scope>NUCLEOTIDE SEQUENCE [GENOMIC DNA]</scope>
</reference>
<sequence length="149" mass="17848">MGDNYWIDPVNLSPQELVETLQRIDQEGYEVIVVTEGGFPMGPFRMAFRIDEEPNMYYISQKDLALEYDPLQFLHWVRQYSGEIINWTHHGRVPWWKIFQMLEAKLEDSYYYETTMFYIPSSISHDCWSLFLQFWREGFGSPPLDVAWS</sequence>
<organism>
    <name type="scientific">Snake adenovirus serotype 1</name>
    <name type="common">SnAdV-1</name>
    <dbReference type="NCBI Taxonomy" id="189830"/>
    <lineage>
        <taxon>Viruses</taxon>
        <taxon>Varidnaviria</taxon>
        <taxon>Bamfordvirae</taxon>
        <taxon>Preplasmiviricota</taxon>
        <taxon>Tectiliviricetes</taxon>
        <taxon>Rowavirales</taxon>
        <taxon>Adenoviridae</taxon>
        <taxon>Atadenovirus</taxon>
        <taxon>Snake atadenovirus A</taxon>
    </lineage>
</organism>
<accession>A9CB99</accession>
<organismHost>
    <name type="scientific">Pantherophis guttatus</name>
    <name type="common">Corn snake</name>
    <name type="synonym">Elaphe guttata</name>
    <dbReference type="NCBI Taxonomy" id="94885"/>
</organismHost>
<protein>
    <recommendedName>
        <fullName>Protein E4.1</fullName>
    </recommendedName>
</protein>
<feature type="chain" id="PRO_0000425913" description="Protein E4.1">
    <location>
        <begin position="1"/>
        <end position="149"/>
    </location>
</feature>
<keyword id="KW-1185">Reference proteome</keyword>